<evidence type="ECO:0000255" key="1">
    <source>
        <dbReference type="HAMAP-Rule" id="MF_00101"/>
    </source>
</evidence>
<proteinExistence type="inferred from homology"/>
<organism>
    <name type="scientific">Clavibacter sepedonicus</name>
    <name type="common">Clavibacter michiganensis subsp. sepedonicus</name>
    <dbReference type="NCBI Taxonomy" id="31964"/>
    <lineage>
        <taxon>Bacteria</taxon>
        <taxon>Bacillati</taxon>
        <taxon>Actinomycetota</taxon>
        <taxon>Actinomycetes</taxon>
        <taxon>Micrococcales</taxon>
        <taxon>Microbacteriaceae</taxon>
        <taxon>Clavibacter</taxon>
    </lineage>
</organism>
<dbReference type="EC" id="2.7.8.7" evidence="1"/>
<dbReference type="EMBL" id="AM849034">
    <property type="protein sequence ID" value="CAQ00638.1"/>
    <property type="molecule type" value="Genomic_DNA"/>
</dbReference>
<dbReference type="RefSeq" id="WP_012297963.1">
    <property type="nucleotide sequence ID" value="NZ_MZMN01000003.1"/>
</dbReference>
<dbReference type="SMR" id="B0RD39"/>
<dbReference type="STRING" id="31964.CMS0519"/>
<dbReference type="KEGG" id="cms:CMS0519"/>
<dbReference type="eggNOG" id="COG0736">
    <property type="taxonomic scope" value="Bacteria"/>
</dbReference>
<dbReference type="HOGENOM" id="CLU_089696_0_0_11"/>
<dbReference type="OrthoDB" id="517356at2"/>
<dbReference type="Proteomes" id="UP000001318">
    <property type="component" value="Chromosome"/>
</dbReference>
<dbReference type="GO" id="GO:0005737">
    <property type="term" value="C:cytoplasm"/>
    <property type="evidence" value="ECO:0007669"/>
    <property type="project" value="UniProtKB-SubCell"/>
</dbReference>
<dbReference type="GO" id="GO:0008897">
    <property type="term" value="F:holo-[acyl-carrier-protein] synthase activity"/>
    <property type="evidence" value="ECO:0007669"/>
    <property type="project" value="UniProtKB-UniRule"/>
</dbReference>
<dbReference type="GO" id="GO:0000287">
    <property type="term" value="F:magnesium ion binding"/>
    <property type="evidence" value="ECO:0007669"/>
    <property type="project" value="UniProtKB-UniRule"/>
</dbReference>
<dbReference type="GO" id="GO:0006633">
    <property type="term" value="P:fatty acid biosynthetic process"/>
    <property type="evidence" value="ECO:0007669"/>
    <property type="project" value="UniProtKB-UniRule"/>
</dbReference>
<dbReference type="Gene3D" id="3.90.470.20">
    <property type="entry name" value="4'-phosphopantetheinyl transferase domain"/>
    <property type="match status" value="1"/>
</dbReference>
<dbReference type="HAMAP" id="MF_00101">
    <property type="entry name" value="AcpS"/>
    <property type="match status" value="1"/>
</dbReference>
<dbReference type="InterPro" id="IPR008278">
    <property type="entry name" value="4-PPantetheinyl_Trfase_dom"/>
</dbReference>
<dbReference type="InterPro" id="IPR037143">
    <property type="entry name" value="4-PPantetheinyl_Trfase_dom_sf"/>
</dbReference>
<dbReference type="InterPro" id="IPR002582">
    <property type="entry name" value="ACPS"/>
</dbReference>
<dbReference type="InterPro" id="IPR004568">
    <property type="entry name" value="Ppantetheine-prot_Trfase_dom"/>
</dbReference>
<dbReference type="NCBIfam" id="TIGR00556">
    <property type="entry name" value="pantethn_trn"/>
    <property type="match status" value="1"/>
</dbReference>
<dbReference type="NCBIfam" id="NF000832">
    <property type="entry name" value="PRK00070.3-2"/>
    <property type="match status" value="1"/>
</dbReference>
<dbReference type="Pfam" id="PF01648">
    <property type="entry name" value="ACPS"/>
    <property type="match status" value="1"/>
</dbReference>
<dbReference type="SUPFAM" id="SSF56214">
    <property type="entry name" value="4'-phosphopantetheinyl transferase"/>
    <property type="match status" value="1"/>
</dbReference>
<comment type="function">
    <text evidence="1">Transfers the 4'-phosphopantetheine moiety from coenzyme A to a Ser of acyl-carrier-protein.</text>
</comment>
<comment type="catalytic activity">
    <reaction evidence="1">
        <text>apo-[ACP] + CoA = holo-[ACP] + adenosine 3',5'-bisphosphate + H(+)</text>
        <dbReference type="Rhea" id="RHEA:12068"/>
        <dbReference type="Rhea" id="RHEA-COMP:9685"/>
        <dbReference type="Rhea" id="RHEA-COMP:9690"/>
        <dbReference type="ChEBI" id="CHEBI:15378"/>
        <dbReference type="ChEBI" id="CHEBI:29999"/>
        <dbReference type="ChEBI" id="CHEBI:57287"/>
        <dbReference type="ChEBI" id="CHEBI:58343"/>
        <dbReference type="ChEBI" id="CHEBI:64479"/>
        <dbReference type="EC" id="2.7.8.7"/>
    </reaction>
</comment>
<comment type="cofactor">
    <cofactor evidence="1">
        <name>Mg(2+)</name>
        <dbReference type="ChEBI" id="CHEBI:18420"/>
    </cofactor>
</comment>
<comment type="subcellular location">
    <subcellularLocation>
        <location evidence="1">Cytoplasm</location>
    </subcellularLocation>
</comment>
<comment type="similarity">
    <text evidence="1">Belongs to the P-Pant transferase superfamily. AcpS family.</text>
</comment>
<accession>B0RD39</accession>
<protein>
    <recommendedName>
        <fullName evidence="1">Holo-[acyl-carrier-protein] synthase</fullName>
        <shortName evidence="1">Holo-ACP synthase</shortName>
        <ecNumber evidence="1">2.7.8.7</ecNumber>
    </recommendedName>
    <alternativeName>
        <fullName evidence="1">4'-phosphopantetheinyl transferase AcpS</fullName>
    </alternativeName>
</protein>
<gene>
    <name evidence="1" type="primary">acpS</name>
    <name type="ordered locus">CMS0519</name>
</gene>
<reference key="1">
    <citation type="journal article" date="2008" name="J. Bacteriol.">
        <title>Genome of the actinomycete plant pathogen Clavibacter michiganensis subsp. sepedonicus suggests recent niche adaptation.</title>
        <authorList>
            <person name="Bentley S.D."/>
            <person name="Corton C."/>
            <person name="Brown S.E."/>
            <person name="Barron A."/>
            <person name="Clark L."/>
            <person name="Doggett J."/>
            <person name="Harris B."/>
            <person name="Ormond D."/>
            <person name="Quail M.A."/>
            <person name="May G."/>
            <person name="Francis D."/>
            <person name="Knudson D."/>
            <person name="Parkhill J."/>
            <person name="Ishimaru C.A."/>
        </authorList>
    </citation>
    <scope>NUCLEOTIDE SEQUENCE [LARGE SCALE GENOMIC DNA]</scope>
    <source>
        <strain>ATCC 33113 / DSM 20744 / JCM 9667 / LMG 2889 / ICMP 2535 / C-1</strain>
    </source>
</reference>
<keyword id="KW-0963">Cytoplasm</keyword>
<keyword id="KW-0275">Fatty acid biosynthesis</keyword>
<keyword id="KW-0276">Fatty acid metabolism</keyword>
<keyword id="KW-0444">Lipid biosynthesis</keyword>
<keyword id="KW-0443">Lipid metabolism</keyword>
<keyword id="KW-0460">Magnesium</keyword>
<keyword id="KW-0479">Metal-binding</keyword>
<keyword id="KW-0808">Transferase</keyword>
<feature type="chain" id="PRO_1000075634" description="Holo-[acyl-carrier-protein] synthase">
    <location>
        <begin position="1"/>
        <end position="119"/>
    </location>
</feature>
<feature type="binding site" evidence="1">
    <location>
        <position position="8"/>
    </location>
    <ligand>
        <name>Mg(2+)</name>
        <dbReference type="ChEBI" id="CHEBI:18420"/>
    </ligand>
</feature>
<feature type="binding site" evidence="1">
    <location>
        <position position="50"/>
    </location>
    <ligand>
        <name>Mg(2+)</name>
        <dbReference type="ChEBI" id="CHEBI:18420"/>
    </ligand>
</feature>
<name>ACPS_CLASE</name>
<sequence>MIRGIGVDVVDVARFARSAERTPGLVPRLFAPAERSLPTRSLAARFAAKEALIKALGGPGGISWQDMEVVRDAHGDPSFQVGGAVARVAAARGVTRIHLSMSHDAGLATAFVVTEGEGA</sequence>